<protein>
    <recommendedName>
        <fullName evidence="1">Fumarate reductase subunit D</fullName>
    </recommendedName>
    <alternativeName>
        <fullName evidence="1">Fumarate reductase 13 kDa hydrophobic protein</fullName>
    </alternativeName>
    <alternativeName>
        <fullName evidence="1">Quinol-fumarate reductase subunit D</fullName>
        <shortName evidence="1">QFR subunit D</shortName>
    </alternativeName>
</protein>
<gene>
    <name evidence="1" type="primary">frdD</name>
    <name type="ordered locus">EcolC_3859</name>
</gene>
<dbReference type="EMBL" id="CP000946">
    <property type="protein sequence ID" value="ACA79463.1"/>
    <property type="molecule type" value="Genomic_DNA"/>
</dbReference>
<dbReference type="RefSeq" id="WP_000609663.1">
    <property type="nucleotide sequence ID" value="NZ_MTFT01000012.1"/>
</dbReference>
<dbReference type="SMR" id="B1ITP5"/>
<dbReference type="GeneID" id="75169672"/>
<dbReference type="KEGG" id="ecl:EcolC_3859"/>
<dbReference type="HOGENOM" id="CLU_168367_0_0_6"/>
<dbReference type="GO" id="GO:0045283">
    <property type="term" value="C:fumarate reductase complex"/>
    <property type="evidence" value="ECO:0007669"/>
    <property type="project" value="UniProtKB-UniRule"/>
</dbReference>
<dbReference type="GO" id="GO:0005886">
    <property type="term" value="C:plasma membrane"/>
    <property type="evidence" value="ECO:0007669"/>
    <property type="project" value="UniProtKB-SubCell"/>
</dbReference>
<dbReference type="GO" id="GO:0000104">
    <property type="term" value="F:succinate dehydrogenase activity"/>
    <property type="evidence" value="ECO:0007669"/>
    <property type="project" value="UniProtKB-UniRule"/>
</dbReference>
<dbReference type="GO" id="GO:0006106">
    <property type="term" value="P:fumarate metabolic process"/>
    <property type="evidence" value="ECO:0007669"/>
    <property type="project" value="InterPro"/>
</dbReference>
<dbReference type="CDD" id="cd00547">
    <property type="entry name" value="QFR_TypeD_subunitD"/>
    <property type="match status" value="1"/>
</dbReference>
<dbReference type="FunFam" id="1.20.1300.10:FF:000002">
    <property type="entry name" value="Fumarate reductase subunit D"/>
    <property type="match status" value="1"/>
</dbReference>
<dbReference type="Gene3D" id="1.20.1300.10">
    <property type="entry name" value="Fumarate reductase/succinate dehydrogenase, transmembrane subunit"/>
    <property type="match status" value="1"/>
</dbReference>
<dbReference type="HAMAP" id="MF_00709">
    <property type="entry name" value="Fumarate_red_D"/>
    <property type="match status" value="1"/>
</dbReference>
<dbReference type="InterPro" id="IPR003418">
    <property type="entry name" value="Fumarate_red_D"/>
</dbReference>
<dbReference type="InterPro" id="IPR034804">
    <property type="entry name" value="SQR/QFR_C/D"/>
</dbReference>
<dbReference type="NCBIfam" id="NF003977">
    <property type="entry name" value="PRK05470.1-1"/>
    <property type="match status" value="1"/>
</dbReference>
<dbReference type="Pfam" id="PF02313">
    <property type="entry name" value="Fumarate_red_D"/>
    <property type="match status" value="1"/>
</dbReference>
<dbReference type="PIRSF" id="PIRSF000179">
    <property type="entry name" value="FrdD"/>
    <property type="match status" value="1"/>
</dbReference>
<dbReference type="SUPFAM" id="SSF81343">
    <property type="entry name" value="Fumarate reductase respiratory complex transmembrane subunits"/>
    <property type="match status" value="1"/>
</dbReference>
<evidence type="ECO:0000255" key="1">
    <source>
        <dbReference type="HAMAP-Rule" id="MF_00709"/>
    </source>
</evidence>
<proteinExistence type="inferred from homology"/>
<feature type="chain" id="PRO_1000083199" description="Fumarate reductase subunit D">
    <location>
        <begin position="1"/>
        <end position="119"/>
    </location>
</feature>
<feature type="transmembrane region" description="Helical" evidence="1">
    <location>
        <begin position="26"/>
        <end position="46"/>
    </location>
</feature>
<feature type="transmembrane region" description="Helical" evidence="1">
    <location>
        <begin position="55"/>
        <end position="75"/>
    </location>
</feature>
<feature type="transmembrane region" description="Helical" evidence="1">
    <location>
        <begin position="99"/>
        <end position="119"/>
    </location>
</feature>
<reference key="1">
    <citation type="submission" date="2008-02" db="EMBL/GenBank/DDBJ databases">
        <title>Complete sequence of Escherichia coli C str. ATCC 8739.</title>
        <authorList>
            <person name="Copeland A."/>
            <person name="Lucas S."/>
            <person name="Lapidus A."/>
            <person name="Glavina del Rio T."/>
            <person name="Dalin E."/>
            <person name="Tice H."/>
            <person name="Bruce D."/>
            <person name="Goodwin L."/>
            <person name="Pitluck S."/>
            <person name="Kiss H."/>
            <person name="Brettin T."/>
            <person name="Detter J.C."/>
            <person name="Han C."/>
            <person name="Kuske C.R."/>
            <person name="Schmutz J."/>
            <person name="Larimer F."/>
            <person name="Land M."/>
            <person name="Hauser L."/>
            <person name="Kyrpides N."/>
            <person name="Mikhailova N."/>
            <person name="Ingram L."/>
            <person name="Richardson P."/>
        </authorList>
    </citation>
    <scope>NUCLEOTIDE SEQUENCE [LARGE SCALE GENOMIC DNA]</scope>
    <source>
        <strain>ATCC 8739 / DSM 1576 / NBRC 3972 / NCIMB 8545 / WDCM 00012 / Crooks</strain>
    </source>
</reference>
<keyword id="KW-0997">Cell inner membrane</keyword>
<keyword id="KW-1003">Cell membrane</keyword>
<keyword id="KW-0472">Membrane</keyword>
<keyword id="KW-0812">Transmembrane</keyword>
<keyword id="KW-1133">Transmembrane helix</keyword>
<accession>B1ITP5</accession>
<sequence length="119" mass="13107">MINPNPKRSDEPVFWGLFGAGGMWSAIIAPVMILLVGILLPLGLFPGDALSYERVLAFAQSFIGRVFLFLMIVLPLWCGLHRMHHAMHDLKIHVPAGKWVFYGLAAILTVVTLIGVVTI</sequence>
<name>FRDD_ECOLC</name>
<comment type="function">
    <text evidence="1">Two distinct, membrane-bound, FAD-containing enzymes are responsible for the catalysis of fumarate and succinate interconversion; fumarate reductase is used in anaerobic growth, and succinate dehydrogenase is used in aerobic growth. Anchors the catalytic components of the fumarate reductase complex to the cell inner membrane, binds quinones.</text>
</comment>
<comment type="subunit">
    <text evidence="1">Part of an enzyme complex containing four subunits: a flavoprotein (FrdA), an iron-sulfur protein (FrdB), and two hydrophobic anchor proteins (FrdC and FrdD).</text>
</comment>
<comment type="subcellular location">
    <subcellularLocation>
        <location evidence="1">Cell inner membrane</location>
        <topology evidence="1">Multi-pass membrane protein</topology>
    </subcellularLocation>
</comment>
<comment type="similarity">
    <text evidence="1">Belongs to the FrdD family.</text>
</comment>
<organism>
    <name type="scientific">Escherichia coli (strain ATCC 8739 / DSM 1576 / NBRC 3972 / NCIMB 8545 / WDCM 00012 / Crooks)</name>
    <dbReference type="NCBI Taxonomy" id="481805"/>
    <lineage>
        <taxon>Bacteria</taxon>
        <taxon>Pseudomonadati</taxon>
        <taxon>Pseudomonadota</taxon>
        <taxon>Gammaproteobacteria</taxon>
        <taxon>Enterobacterales</taxon>
        <taxon>Enterobacteriaceae</taxon>
        <taxon>Escherichia</taxon>
    </lineage>
</organism>